<proteinExistence type="inferred from homology"/>
<accession>A4X378</accession>
<dbReference type="EC" id="3.6.1.9" evidence="1"/>
<dbReference type="EMBL" id="CP000667">
    <property type="protein sequence ID" value="ABP53328.1"/>
    <property type="molecule type" value="Genomic_DNA"/>
</dbReference>
<dbReference type="RefSeq" id="WP_011904762.1">
    <property type="nucleotide sequence ID" value="NC_009380.1"/>
</dbReference>
<dbReference type="SMR" id="A4X378"/>
<dbReference type="STRING" id="369723.Strop_0851"/>
<dbReference type="KEGG" id="stp:Strop_0851"/>
<dbReference type="PATRIC" id="fig|369723.5.peg.868"/>
<dbReference type="eggNOG" id="COG0424">
    <property type="taxonomic scope" value="Bacteria"/>
</dbReference>
<dbReference type="HOGENOM" id="CLU_040416_1_2_11"/>
<dbReference type="Proteomes" id="UP000000235">
    <property type="component" value="Chromosome"/>
</dbReference>
<dbReference type="GO" id="GO:0005737">
    <property type="term" value="C:cytoplasm"/>
    <property type="evidence" value="ECO:0007669"/>
    <property type="project" value="UniProtKB-SubCell"/>
</dbReference>
<dbReference type="GO" id="GO:0047429">
    <property type="term" value="F:nucleoside triphosphate diphosphatase activity"/>
    <property type="evidence" value="ECO:0007669"/>
    <property type="project" value="UniProtKB-EC"/>
</dbReference>
<dbReference type="GO" id="GO:0009117">
    <property type="term" value="P:nucleotide metabolic process"/>
    <property type="evidence" value="ECO:0007669"/>
    <property type="project" value="UniProtKB-KW"/>
</dbReference>
<dbReference type="CDD" id="cd00555">
    <property type="entry name" value="Maf"/>
    <property type="match status" value="1"/>
</dbReference>
<dbReference type="Gene3D" id="3.90.950.10">
    <property type="match status" value="1"/>
</dbReference>
<dbReference type="HAMAP" id="MF_00528">
    <property type="entry name" value="Maf"/>
    <property type="match status" value="1"/>
</dbReference>
<dbReference type="InterPro" id="IPR029001">
    <property type="entry name" value="ITPase-like_fam"/>
</dbReference>
<dbReference type="InterPro" id="IPR003697">
    <property type="entry name" value="Maf-like"/>
</dbReference>
<dbReference type="NCBIfam" id="TIGR00172">
    <property type="entry name" value="maf"/>
    <property type="match status" value="1"/>
</dbReference>
<dbReference type="PANTHER" id="PTHR43213">
    <property type="entry name" value="BIFUNCTIONAL DTTP/UTP PYROPHOSPHATASE/METHYLTRANSFERASE PROTEIN-RELATED"/>
    <property type="match status" value="1"/>
</dbReference>
<dbReference type="PANTHER" id="PTHR43213:SF5">
    <property type="entry name" value="BIFUNCTIONAL DTTP_UTP PYROPHOSPHATASE_METHYLTRANSFERASE PROTEIN-RELATED"/>
    <property type="match status" value="1"/>
</dbReference>
<dbReference type="Pfam" id="PF02545">
    <property type="entry name" value="Maf"/>
    <property type="match status" value="1"/>
</dbReference>
<dbReference type="PIRSF" id="PIRSF006305">
    <property type="entry name" value="Maf"/>
    <property type="match status" value="1"/>
</dbReference>
<dbReference type="SUPFAM" id="SSF52972">
    <property type="entry name" value="ITPase-like"/>
    <property type="match status" value="1"/>
</dbReference>
<reference key="1">
    <citation type="journal article" date="2007" name="Proc. Natl. Acad. Sci. U.S.A.">
        <title>Genome sequencing reveals complex secondary metabolome in the marine actinomycete Salinispora tropica.</title>
        <authorList>
            <person name="Udwary D.W."/>
            <person name="Zeigler L."/>
            <person name="Asolkar R.N."/>
            <person name="Singan V."/>
            <person name="Lapidus A."/>
            <person name="Fenical W."/>
            <person name="Jensen P.R."/>
            <person name="Moore B.S."/>
        </authorList>
    </citation>
    <scope>NUCLEOTIDE SEQUENCE [LARGE SCALE GENOMIC DNA]</scope>
    <source>
        <strain>ATCC BAA-916 / DSM 44818 / JCM 13857 / NBRC 105044 / CNB-440</strain>
    </source>
</reference>
<name>NTPP_SALTO</name>
<gene>
    <name type="ordered locus">Strop_0851</name>
</gene>
<protein>
    <recommendedName>
        <fullName evidence="1">Nucleoside triphosphate pyrophosphatase</fullName>
        <ecNumber evidence="1">3.6.1.9</ecNumber>
    </recommendedName>
    <alternativeName>
        <fullName evidence="1">Nucleotide pyrophosphatase</fullName>
        <shortName evidence="1">Nucleotide PPase</shortName>
    </alternativeName>
</protein>
<keyword id="KW-0963">Cytoplasm</keyword>
<keyword id="KW-0378">Hydrolase</keyword>
<keyword id="KW-0546">Nucleotide metabolism</keyword>
<keyword id="KW-1185">Reference proteome</keyword>
<sequence length="226" mass="23686">MSGSLPLRLVLASASPARRKTLQAAGIEPDVLVSGVDESLVASDRADELCLELARLKAQAVLTRLRPAQDQRTLVIGCDSVLEFDGQIFGKPADSADAIHRWERMRGRSGVLHSGHCLVDVTAGRRAEAVASTTVHFAAVSDDEIATYVATGEPLVVAGAFTIDGLGGPFVERIEGDPGTVVGLSLPLLRRLLAELNLPITGLWSRGTSTHPTPGTSATPKPNPGA</sequence>
<feature type="chain" id="PRO_1000081721" description="Nucleoside triphosphate pyrophosphatase">
    <location>
        <begin position="1"/>
        <end position="226"/>
    </location>
</feature>
<feature type="region of interest" description="Disordered" evidence="2">
    <location>
        <begin position="204"/>
        <end position="226"/>
    </location>
</feature>
<feature type="compositionally biased region" description="Polar residues" evidence="2">
    <location>
        <begin position="206"/>
        <end position="220"/>
    </location>
</feature>
<feature type="active site" description="Proton acceptor" evidence="1">
    <location>
        <position position="79"/>
    </location>
</feature>
<evidence type="ECO:0000255" key="1">
    <source>
        <dbReference type="HAMAP-Rule" id="MF_00528"/>
    </source>
</evidence>
<evidence type="ECO:0000256" key="2">
    <source>
        <dbReference type="SAM" id="MobiDB-lite"/>
    </source>
</evidence>
<organism>
    <name type="scientific">Salinispora tropica (strain ATCC BAA-916 / DSM 44818 / JCM 13857 / NBRC 105044 / CNB-440)</name>
    <dbReference type="NCBI Taxonomy" id="369723"/>
    <lineage>
        <taxon>Bacteria</taxon>
        <taxon>Bacillati</taxon>
        <taxon>Actinomycetota</taxon>
        <taxon>Actinomycetes</taxon>
        <taxon>Micromonosporales</taxon>
        <taxon>Micromonosporaceae</taxon>
        <taxon>Salinispora</taxon>
    </lineage>
</organism>
<comment type="function">
    <text evidence="1">Nucleoside triphosphate pyrophosphatase. May have a dual role in cell division arrest and in preventing the incorporation of modified nucleotides into cellular nucleic acids.</text>
</comment>
<comment type="catalytic activity">
    <reaction evidence="1">
        <text>a ribonucleoside 5'-triphosphate + H2O = a ribonucleoside 5'-phosphate + diphosphate + H(+)</text>
        <dbReference type="Rhea" id="RHEA:23996"/>
        <dbReference type="ChEBI" id="CHEBI:15377"/>
        <dbReference type="ChEBI" id="CHEBI:15378"/>
        <dbReference type="ChEBI" id="CHEBI:33019"/>
        <dbReference type="ChEBI" id="CHEBI:58043"/>
        <dbReference type="ChEBI" id="CHEBI:61557"/>
        <dbReference type="EC" id="3.6.1.9"/>
    </reaction>
</comment>
<comment type="catalytic activity">
    <reaction evidence="1">
        <text>a 2'-deoxyribonucleoside 5'-triphosphate + H2O = a 2'-deoxyribonucleoside 5'-phosphate + diphosphate + H(+)</text>
        <dbReference type="Rhea" id="RHEA:44644"/>
        <dbReference type="ChEBI" id="CHEBI:15377"/>
        <dbReference type="ChEBI" id="CHEBI:15378"/>
        <dbReference type="ChEBI" id="CHEBI:33019"/>
        <dbReference type="ChEBI" id="CHEBI:61560"/>
        <dbReference type="ChEBI" id="CHEBI:65317"/>
        <dbReference type="EC" id="3.6.1.9"/>
    </reaction>
</comment>
<comment type="cofactor">
    <cofactor evidence="1">
        <name>a divalent metal cation</name>
        <dbReference type="ChEBI" id="CHEBI:60240"/>
    </cofactor>
</comment>
<comment type="subcellular location">
    <subcellularLocation>
        <location evidence="1">Cytoplasm</location>
    </subcellularLocation>
</comment>
<comment type="similarity">
    <text evidence="1">Belongs to the Maf family.</text>
</comment>